<feature type="chain" id="PRO_1000002450" description="Holliday junction branch migration complex subunit RuvA">
    <location>
        <begin position="1"/>
        <end position="216"/>
    </location>
</feature>
<feature type="region of interest" description="Domain I" evidence="1">
    <location>
        <begin position="1"/>
        <end position="64"/>
    </location>
</feature>
<feature type="region of interest" description="Domain II" evidence="1">
    <location>
        <begin position="65"/>
        <end position="143"/>
    </location>
</feature>
<feature type="region of interest" description="Flexible linker" evidence="1">
    <location>
        <begin position="144"/>
        <end position="163"/>
    </location>
</feature>
<feature type="region of interest" description="Domain III" evidence="1">
    <location>
        <begin position="164"/>
        <end position="216"/>
    </location>
</feature>
<organism>
    <name type="scientific">Francisella tularensis subsp. holarctica (strain LVS)</name>
    <dbReference type="NCBI Taxonomy" id="376619"/>
    <lineage>
        <taxon>Bacteria</taxon>
        <taxon>Pseudomonadati</taxon>
        <taxon>Pseudomonadota</taxon>
        <taxon>Gammaproteobacteria</taxon>
        <taxon>Thiotrichales</taxon>
        <taxon>Francisellaceae</taxon>
        <taxon>Francisella</taxon>
    </lineage>
</organism>
<proteinExistence type="inferred from homology"/>
<reference key="1">
    <citation type="submission" date="2006-03" db="EMBL/GenBank/DDBJ databases">
        <title>Complete genome sequence of Francisella tularensis LVS (Live Vaccine Strain).</title>
        <authorList>
            <person name="Chain P."/>
            <person name="Larimer F."/>
            <person name="Land M."/>
            <person name="Stilwagen S."/>
            <person name="Larsson P."/>
            <person name="Bearden S."/>
            <person name="Chu M."/>
            <person name="Oyston P."/>
            <person name="Forsman M."/>
            <person name="Andersson S."/>
            <person name="Lindler L."/>
            <person name="Titball R."/>
            <person name="Garcia E."/>
        </authorList>
    </citation>
    <scope>NUCLEOTIDE SEQUENCE [LARGE SCALE GENOMIC DNA]</scope>
    <source>
        <strain>LVS</strain>
    </source>
</reference>
<comment type="function">
    <text evidence="1">The RuvA-RuvB-RuvC complex processes Holliday junction (HJ) DNA during genetic recombination and DNA repair, while the RuvA-RuvB complex plays an important role in the rescue of blocked DNA replication forks via replication fork reversal (RFR). RuvA specifically binds to HJ cruciform DNA, conferring on it an open structure. The RuvB hexamer acts as an ATP-dependent pump, pulling dsDNA into and through the RuvAB complex. HJ branch migration allows RuvC to scan DNA until it finds its consensus sequence, where it cleaves and resolves the cruciform DNA.</text>
</comment>
<comment type="subunit">
    <text evidence="1">Homotetramer. Forms an RuvA(8)-RuvB(12)-Holliday junction (HJ) complex. HJ DNA is sandwiched between 2 RuvA tetramers; dsDNA enters through RuvA and exits via RuvB. An RuvB hexamer assembles on each DNA strand where it exits the tetramer. Each RuvB hexamer is contacted by two RuvA subunits (via domain III) on 2 adjacent RuvB subunits; this complex drives branch migration. In the full resolvosome a probable DNA-RuvA(4)-RuvB(12)-RuvC(2) complex forms which resolves the HJ.</text>
</comment>
<comment type="subcellular location">
    <subcellularLocation>
        <location evidence="1">Cytoplasm</location>
    </subcellularLocation>
</comment>
<comment type="domain">
    <text evidence="1">Has three domains with a flexible linker between the domains II and III and assumes an 'L' shape. Domain III is highly mobile and contacts RuvB.</text>
</comment>
<comment type="similarity">
    <text evidence="1">Belongs to the RuvA family.</text>
</comment>
<gene>
    <name evidence="1" type="primary">ruvA</name>
    <name type="ordered locus">FTL_0932</name>
</gene>
<accession>Q2A3Q7</accession>
<sequence length="216" mass="23450">MISFIKGVLIEKDPTALLIDVNGIGYEVFVPMTTFYTLGDIDSQVSLYTHFVVREDAQQLYGFKSKVDKKVFQELIKVNGIGARTAIAILSGMDSKTLLHCIENKDYALLATVPGIGKKTAERLVVEIYDKLLKMANEIYAQTSGTTTTSQDSQAQQAPTSVVLANSIFNESVDALLALGYKQKDAEKMARSAMGDATTAAEVIRKALQGSIKSKG</sequence>
<dbReference type="EMBL" id="AM233362">
    <property type="protein sequence ID" value="CAJ79371.1"/>
    <property type="molecule type" value="Genomic_DNA"/>
</dbReference>
<dbReference type="RefSeq" id="WP_003015706.1">
    <property type="nucleotide sequence ID" value="NZ_CP009694.1"/>
</dbReference>
<dbReference type="SMR" id="Q2A3Q7"/>
<dbReference type="KEGG" id="ftl:FTL_0932"/>
<dbReference type="Proteomes" id="UP000001944">
    <property type="component" value="Chromosome"/>
</dbReference>
<dbReference type="GO" id="GO:0005737">
    <property type="term" value="C:cytoplasm"/>
    <property type="evidence" value="ECO:0007669"/>
    <property type="project" value="UniProtKB-SubCell"/>
</dbReference>
<dbReference type="GO" id="GO:0009379">
    <property type="term" value="C:Holliday junction helicase complex"/>
    <property type="evidence" value="ECO:0007669"/>
    <property type="project" value="InterPro"/>
</dbReference>
<dbReference type="GO" id="GO:0048476">
    <property type="term" value="C:Holliday junction resolvase complex"/>
    <property type="evidence" value="ECO:0007669"/>
    <property type="project" value="UniProtKB-UniRule"/>
</dbReference>
<dbReference type="GO" id="GO:0005524">
    <property type="term" value="F:ATP binding"/>
    <property type="evidence" value="ECO:0007669"/>
    <property type="project" value="InterPro"/>
</dbReference>
<dbReference type="GO" id="GO:0000400">
    <property type="term" value="F:four-way junction DNA binding"/>
    <property type="evidence" value="ECO:0007669"/>
    <property type="project" value="UniProtKB-UniRule"/>
</dbReference>
<dbReference type="GO" id="GO:0009378">
    <property type="term" value="F:four-way junction helicase activity"/>
    <property type="evidence" value="ECO:0007669"/>
    <property type="project" value="InterPro"/>
</dbReference>
<dbReference type="GO" id="GO:0006310">
    <property type="term" value="P:DNA recombination"/>
    <property type="evidence" value="ECO:0007669"/>
    <property type="project" value="UniProtKB-UniRule"/>
</dbReference>
<dbReference type="GO" id="GO:0006281">
    <property type="term" value="P:DNA repair"/>
    <property type="evidence" value="ECO:0007669"/>
    <property type="project" value="UniProtKB-UniRule"/>
</dbReference>
<dbReference type="CDD" id="cd14332">
    <property type="entry name" value="UBA_RuvA_C"/>
    <property type="match status" value="1"/>
</dbReference>
<dbReference type="Gene3D" id="1.10.150.20">
    <property type="entry name" value="5' to 3' exonuclease, C-terminal subdomain"/>
    <property type="match status" value="1"/>
</dbReference>
<dbReference type="Gene3D" id="1.10.8.10">
    <property type="entry name" value="DNA helicase RuvA subunit, C-terminal domain"/>
    <property type="match status" value="1"/>
</dbReference>
<dbReference type="Gene3D" id="2.40.50.140">
    <property type="entry name" value="Nucleic acid-binding proteins"/>
    <property type="match status" value="1"/>
</dbReference>
<dbReference type="HAMAP" id="MF_00031">
    <property type="entry name" value="DNA_HJ_migration_RuvA"/>
    <property type="match status" value="1"/>
</dbReference>
<dbReference type="InterPro" id="IPR013849">
    <property type="entry name" value="DNA_helicase_Holl-junc_RuvA_I"/>
</dbReference>
<dbReference type="InterPro" id="IPR003583">
    <property type="entry name" value="Hlx-hairpin-Hlx_DNA-bd_motif"/>
</dbReference>
<dbReference type="InterPro" id="IPR012340">
    <property type="entry name" value="NA-bd_OB-fold"/>
</dbReference>
<dbReference type="InterPro" id="IPR000085">
    <property type="entry name" value="RuvA"/>
</dbReference>
<dbReference type="InterPro" id="IPR010994">
    <property type="entry name" value="RuvA_2-like"/>
</dbReference>
<dbReference type="InterPro" id="IPR011114">
    <property type="entry name" value="RuvA_C"/>
</dbReference>
<dbReference type="InterPro" id="IPR036267">
    <property type="entry name" value="RuvA_C_sf"/>
</dbReference>
<dbReference type="NCBIfam" id="TIGR00084">
    <property type="entry name" value="ruvA"/>
    <property type="match status" value="1"/>
</dbReference>
<dbReference type="Pfam" id="PF14520">
    <property type="entry name" value="HHH_5"/>
    <property type="match status" value="1"/>
</dbReference>
<dbReference type="Pfam" id="PF07499">
    <property type="entry name" value="RuvA_C"/>
    <property type="match status" value="1"/>
</dbReference>
<dbReference type="Pfam" id="PF01330">
    <property type="entry name" value="RuvA_N"/>
    <property type="match status" value="1"/>
</dbReference>
<dbReference type="SMART" id="SM00278">
    <property type="entry name" value="HhH1"/>
    <property type="match status" value="2"/>
</dbReference>
<dbReference type="SUPFAM" id="SSF46929">
    <property type="entry name" value="DNA helicase RuvA subunit, C-terminal domain"/>
    <property type="match status" value="1"/>
</dbReference>
<dbReference type="SUPFAM" id="SSF50249">
    <property type="entry name" value="Nucleic acid-binding proteins"/>
    <property type="match status" value="1"/>
</dbReference>
<dbReference type="SUPFAM" id="SSF47781">
    <property type="entry name" value="RuvA domain 2-like"/>
    <property type="match status" value="1"/>
</dbReference>
<evidence type="ECO:0000255" key="1">
    <source>
        <dbReference type="HAMAP-Rule" id="MF_00031"/>
    </source>
</evidence>
<keyword id="KW-0963">Cytoplasm</keyword>
<keyword id="KW-0227">DNA damage</keyword>
<keyword id="KW-0233">DNA recombination</keyword>
<keyword id="KW-0234">DNA repair</keyword>
<keyword id="KW-0238">DNA-binding</keyword>
<keyword id="KW-1185">Reference proteome</keyword>
<name>RUVA_FRATH</name>
<protein>
    <recommendedName>
        <fullName evidence="1">Holliday junction branch migration complex subunit RuvA</fullName>
    </recommendedName>
</protein>